<feature type="chain" id="PRO_0000148737" description="Vacuolar protein sorting-associated protein 54">
    <location>
        <begin position="1"/>
        <end position="889"/>
    </location>
</feature>
<feature type="region of interest" description="Disordered" evidence="2">
    <location>
        <begin position="1"/>
        <end position="44"/>
    </location>
</feature>
<feature type="region of interest" description="Disordered" evidence="2">
    <location>
        <begin position="729"/>
        <end position="748"/>
    </location>
</feature>
<feature type="coiled-coil region" evidence="1">
    <location>
        <begin position="286"/>
        <end position="321"/>
    </location>
</feature>
<feature type="compositionally biased region" description="Polar residues" evidence="2">
    <location>
        <begin position="1"/>
        <end position="14"/>
    </location>
</feature>
<feature type="compositionally biased region" description="Polar residues" evidence="2">
    <location>
        <begin position="30"/>
        <end position="44"/>
    </location>
</feature>
<feature type="compositionally biased region" description="Basic and acidic residues" evidence="2">
    <location>
        <begin position="729"/>
        <end position="744"/>
    </location>
</feature>
<feature type="modified residue" description="Phosphoserine" evidence="15 16 17">
    <location>
        <position position="69"/>
    </location>
</feature>
<feature type="modified residue" description="Phosphoserine" evidence="15">
    <location>
        <position position="72"/>
    </location>
</feature>
<feature type="modified residue" description="Phosphothreonine" evidence="16">
    <location>
        <position position="74"/>
    </location>
</feature>
<reference key="1">
    <citation type="journal article" date="1996" name="Yeast">
        <title>Sequencing and analysis of a 35.4 kb region on the right arm of chromosome IV from Saccharomyces cerevisiae reveal 23 open reading frames.</title>
        <authorList>
            <person name="Eide L.G."/>
            <person name="Sander C."/>
            <person name="Prydz H."/>
        </authorList>
    </citation>
    <scope>NUCLEOTIDE SEQUENCE [GENOMIC DNA]</scope>
</reference>
<reference key="2">
    <citation type="journal article" date="1997" name="Nature">
        <title>The nucleotide sequence of Saccharomyces cerevisiae chromosome IV.</title>
        <authorList>
            <person name="Jacq C."/>
            <person name="Alt-Moerbe J."/>
            <person name="Andre B."/>
            <person name="Arnold W."/>
            <person name="Bahr A."/>
            <person name="Ballesta J.P.G."/>
            <person name="Bargues M."/>
            <person name="Baron L."/>
            <person name="Becker A."/>
            <person name="Biteau N."/>
            <person name="Bloecker H."/>
            <person name="Blugeon C."/>
            <person name="Boskovic J."/>
            <person name="Brandt P."/>
            <person name="Brueckner M."/>
            <person name="Buitrago M.J."/>
            <person name="Coster F."/>
            <person name="Delaveau T."/>
            <person name="del Rey F."/>
            <person name="Dujon B."/>
            <person name="Eide L.G."/>
            <person name="Garcia-Cantalejo J.M."/>
            <person name="Goffeau A."/>
            <person name="Gomez-Peris A."/>
            <person name="Granotier C."/>
            <person name="Hanemann V."/>
            <person name="Hankeln T."/>
            <person name="Hoheisel J.D."/>
            <person name="Jaeger W."/>
            <person name="Jimenez A."/>
            <person name="Jonniaux J.-L."/>
            <person name="Kraemer C."/>
            <person name="Kuester H."/>
            <person name="Laamanen P."/>
            <person name="Legros Y."/>
            <person name="Louis E.J."/>
            <person name="Moeller-Rieker S."/>
            <person name="Monnet A."/>
            <person name="Moro M."/>
            <person name="Mueller-Auer S."/>
            <person name="Nussbaumer B."/>
            <person name="Paricio N."/>
            <person name="Paulin L."/>
            <person name="Perea J."/>
            <person name="Perez-Alonso M."/>
            <person name="Perez-Ortin J.E."/>
            <person name="Pohl T.M."/>
            <person name="Prydz H."/>
            <person name="Purnelle B."/>
            <person name="Rasmussen S.W."/>
            <person name="Remacha M.A."/>
            <person name="Revuelta J.L."/>
            <person name="Rieger M."/>
            <person name="Salom D."/>
            <person name="Saluz H.P."/>
            <person name="Saiz J.E."/>
            <person name="Saren A.-M."/>
            <person name="Schaefer M."/>
            <person name="Scharfe M."/>
            <person name="Schmidt E.R."/>
            <person name="Schneider C."/>
            <person name="Scholler P."/>
            <person name="Schwarz S."/>
            <person name="Soler-Mira A."/>
            <person name="Urrestarazu L.A."/>
            <person name="Verhasselt P."/>
            <person name="Vissers S."/>
            <person name="Voet M."/>
            <person name="Volckaert G."/>
            <person name="Wagner G."/>
            <person name="Wambutt R."/>
            <person name="Wedler E."/>
            <person name="Wedler H."/>
            <person name="Woelfl S."/>
            <person name="Harris D.E."/>
            <person name="Bowman S."/>
            <person name="Brown D."/>
            <person name="Churcher C.M."/>
            <person name="Connor R."/>
            <person name="Dedman K."/>
            <person name="Gentles S."/>
            <person name="Hamlin N."/>
            <person name="Hunt S."/>
            <person name="Jones L."/>
            <person name="McDonald S."/>
            <person name="Murphy L.D."/>
            <person name="Niblett D."/>
            <person name="Odell C."/>
            <person name="Oliver K."/>
            <person name="Rajandream M.A."/>
            <person name="Richards C."/>
            <person name="Shore L."/>
            <person name="Walsh S.V."/>
            <person name="Barrell B.G."/>
            <person name="Dietrich F.S."/>
            <person name="Mulligan J.T."/>
            <person name="Allen E."/>
            <person name="Araujo R."/>
            <person name="Aviles E."/>
            <person name="Berno A."/>
            <person name="Carpenter J."/>
            <person name="Chen E."/>
            <person name="Cherry J.M."/>
            <person name="Chung E."/>
            <person name="Duncan M."/>
            <person name="Hunicke-Smith S."/>
            <person name="Hyman R.W."/>
            <person name="Komp C."/>
            <person name="Lashkari D."/>
            <person name="Lew H."/>
            <person name="Lin D."/>
            <person name="Mosedale D."/>
            <person name="Nakahara K."/>
            <person name="Namath A."/>
            <person name="Oefner P."/>
            <person name="Oh C."/>
            <person name="Petel F.X."/>
            <person name="Roberts D."/>
            <person name="Schramm S."/>
            <person name="Schroeder M."/>
            <person name="Shogren T."/>
            <person name="Shroff N."/>
            <person name="Winant A."/>
            <person name="Yelton M.A."/>
            <person name="Botstein D."/>
            <person name="Davis R.W."/>
            <person name="Johnston M."/>
            <person name="Andrews S."/>
            <person name="Brinkman R."/>
            <person name="Cooper J."/>
            <person name="Ding H."/>
            <person name="Du Z."/>
            <person name="Favello A."/>
            <person name="Fulton L."/>
            <person name="Gattung S."/>
            <person name="Greco T."/>
            <person name="Hallsworth K."/>
            <person name="Hawkins J."/>
            <person name="Hillier L.W."/>
            <person name="Jier M."/>
            <person name="Johnson D."/>
            <person name="Johnston L."/>
            <person name="Kirsten J."/>
            <person name="Kucaba T."/>
            <person name="Langston Y."/>
            <person name="Latreille P."/>
            <person name="Le T."/>
            <person name="Mardis E."/>
            <person name="Menezes S."/>
            <person name="Miller N."/>
            <person name="Nhan M."/>
            <person name="Pauley A."/>
            <person name="Peluso D."/>
            <person name="Rifkin L."/>
            <person name="Riles L."/>
            <person name="Taich A."/>
            <person name="Trevaskis E."/>
            <person name="Vignati D."/>
            <person name="Wilcox L."/>
            <person name="Wohldman P."/>
            <person name="Vaudin M."/>
            <person name="Wilson R."/>
            <person name="Waterston R."/>
            <person name="Albermann K."/>
            <person name="Hani J."/>
            <person name="Heumann K."/>
            <person name="Kleine K."/>
            <person name="Mewes H.-W."/>
            <person name="Zollner A."/>
            <person name="Zaccaria P."/>
        </authorList>
    </citation>
    <scope>NUCLEOTIDE SEQUENCE [LARGE SCALE GENOMIC DNA]</scope>
    <source>
        <strain>ATCC 204508 / S288c</strain>
    </source>
</reference>
<reference key="3">
    <citation type="journal article" date="2014" name="G3 (Bethesda)">
        <title>The reference genome sequence of Saccharomyces cerevisiae: Then and now.</title>
        <authorList>
            <person name="Engel S.R."/>
            <person name="Dietrich F.S."/>
            <person name="Fisk D.G."/>
            <person name="Binkley G."/>
            <person name="Balakrishnan R."/>
            <person name="Costanzo M.C."/>
            <person name="Dwight S.S."/>
            <person name="Hitz B.C."/>
            <person name="Karra K."/>
            <person name="Nash R.S."/>
            <person name="Weng S."/>
            <person name="Wong E.D."/>
            <person name="Lloyd P."/>
            <person name="Skrzypek M.S."/>
            <person name="Miyasato S.R."/>
            <person name="Simison M."/>
            <person name="Cherry J.M."/>
        </authorList>
    </citation>
    <scope>GENOME REANNOTATION</scope>
    <source>
        <strain>ATCC 204508 / S288c</strain>
    </source>
</reference>
<reference key="4">
    <citation type="journal article" date="1998" name="Chromosoma">
        <title>Regulation of tubulin polypeptides and microtubule function: Luv1p interacts with the beta-tubulin binding protein Rbl2p.</title>
        <authorList>
            <person name="Smith A.M."/>
            <person name="Archer J.E."/>
            <person name="Solomon F."/>
        </authorList>
    </citation>
    <scope>INTERACTION WITH RBL2</scope>
</reference>
<reference key="5">
    <citation type="journal article" date="2000" name="Genetics">
        <title>Synthetic genetic interactions with temperature-sensitive clathrin in Saccharomyces cerevisiae. Roles for synaptojanin-like Inp53p and dynamin-related Vps1p in clathrin-dependent protein sorting at the trans-Golgi network.</title>
        <authorList>
            <person name="Bensen E.S."/>
            <person name="Costaguta G."/>
            <person name="Payne G.S."/>
        </authorList>
    </citation>
    <scope>FUNCTION</scope>
</reference>
<reference key="6">
    <citation type="journal article" date="2000" name="Mol. Biol. Cell">
        <title>Vps52p, Vps53p, and Vps54p form a novel multisubunit complex required for protein sorting at the yeast late Golgi.</title>
        <authorList>
            <person name="Conibear E."/>
            <person name="Stevens T.H."/>
        </authorList>
    </citation>
    <scope>FUNCTION</scope>
    <scope>INTERACTION WITH VSP52 AND VSP53</scope>
</reference>
<reference key="7">
    <citation type="journal article" date="2000" name="Mol. Biol. Cell">
        <title>Luv1p/Rki1p/Tcs3p/Vps54p, a yeast protein that localizes to the late Golgi and early endosome, is required for normal vacuolar morphology.</title>
        <authorList>
            <person name="Conboy M.J."/>
            <person name="Cyert M.S."/>
        </authorList>
    </citation>
    <scope>FUNCTION</scope>
    <scope>SUBCELLULAR LOCATION</scope>
</reference>
<reference key="8">
    <citation type="journal article" date="2001" name="EMBO J.">
        <title>An effector of Ypt6p binds the SNARE Tlg1p and mediates selective fusion of vesicles with late Golgi membranes.</title>
        <authorList>
            <person name="Siniossoglou S."/>
            <person name="Pelham H.R.B."/>
        </authorList>
    </citation>
    <scope>FUNCTION</scope>
    <scope>INTERACTION WITH TLG1 AND YPT6</scope>
</reference>
<reference key="9">
    <citation type="journal article" date="2002" name="J. Biol. Chem.">
        <title>Vps51p links the VFT complex to the SNARE Tlg1p.</title>
        <authorList>
            <person name="Siniossoglou S."/>
            <person name="Pelham H.R.B."/>
        </authorList>
    </citation>
    <scope>FUNCTION</scope>
    <scope>SUBCELLULAR LOCATION</scope>
    <scope>INTERACTION WITH VPS51; VSP52 AND VSP53</scope>
</reference>
<reference key="10">
    <citation type="journal article" date="2002" name="Mol. Genet. Genomics">
        <title>The vesicular transport protein Cgp1p/Vps54p/Tcs3p/Luv1p is required for the integrity of the actin cytoskeleton.</title>
        <authorList>
            <person name="Fiedler T.A."/>
            <person name="Karpova T.S."/>
            <person name="Fleig U."/>
            <person name="Young M.E."/>
            <person name="Cooper J.A."/>
            <person name="Hegemann J.H."/>
        </authorList>
    </citation>
    <scope>FUNCTION</scope>
    <scope>INTERACTION WITH VPS52; SEC10; SEC15 AND EXO84</scope>
</reference>
<reference key="11">
    <citation type="journal article" date="2003" name="Curr. Biol.">
        <title>The ARF-like GTPases Arl1p and Arl3p act in a pathway that interacts with vesicle-tethering factors at the Golgi apparatus.</title>
        <authorList>
            <person name="Panic B."/>
            <person name="Whyte J.R.C."/>
            <person name="Munro S."/>
        </authorList>
    </citation>
    <scope>INTERACTION WITH ARL1</scope>
</reference>
<reference key="12">
    <citation type="journal article" date="2003" name="J. Biol. Chem.">
        <title>Vps51 is part of the yeast Vps fifty-three tethering complex essential for retrograde traffic from the early endosome and Cvt vesicle completion.</title>
        <authorList>
            <person name="Reggiori F."/>
            <person name="Wang C.-W."/>
            <person name="Stromhaug P.E."/>
            <person name="Shintani T."/>
            <person name="Klionsky D.J."/>
        </authorList>
    </citation>
    <scope>FUNCTION</scope>
    <scope>INTERACTION WITH VPS51; VPS52 AND VPS53</scope>
</reference>
<reference key="13">
    <citation type="journal article" date="2003" name="Mol. Biol. Cell">
        <title>Vps51p mediates the association of the GARP (Vps52/53/54) complex with the late Golgi t-SNARE Tlg1p.</title>
        <authorList>
            <person name="Conibear E."/>
            <person name="Cleck J.N."/>
            <person name="Stevens T.H."/>
        </authorList>
    </citation>
    <scope>FUNCTION</scope>
    <scope>INTERACTION WITH VPS51; VPS52 AND VPS53</scope>
</reference>
<reference key="14">
    <citation type="journal article" date="2003" name="Nature">
        <title>Global analysis of protein localization in budding yeast.</title>
        <authorList>
            <person name="Huh W.-K."/>
            <person name="Falvo J.V."/>
            <person name="Gerke L.C."/>
            <person name="Carroll A.S."/>
            <person name="Howson R.W."/>
            <person name="Weissman J.S."/>
            <person name="O'Shea E.K."/>
        </authorList>
    </citation>
    <scope>SUBCELLULAR LOCATION [LARGE SCALE ANALYSIS]</scope>
</reference>
<reference key="15">
    <citation type="journal article" date="2003" name="Nature">
        <title>Global analysis of protein expression in yeast.</title>
        <authorList>
            <person name="Ghaemmaghami S."/>
            <person name="Huh W.-K."/>
            <person name="Bower K."/>
            <person name="Howson R.W."/>
            <person name="Belle A."/>
            <person name="Dephoure N."/>
            <person name="O'Shea E.K."/>
            <person name="Weissman J.S."/>
        </authorList>
    </citation>
    <scope>LEVEL OF PROTEIN EXPRESSION [LARGE SCALE ANALYSIS]</scope>
</reference>
<reference key="16">
    <citation type="journal article" date="2003" name="Proc. Natl. Acad. Sci. U.S.A.">
        <title>The proteome of Saccharomyces cerevisiae mitochondria.</title>
        <authorList>
            <person name="Sickmann A."/>
            <person name="Reinders J."/>
            <person name="Wagner Y."/>
            <person name="Joppich C."/>
            <person name="Zahedi R.P."/>
            <person name="Meyer H.E."/>
            <person name="Schoenfisch B."/>
            <person name="Perschil I."/>
            <person name="Chacinska A."/>
            <person name="Guiard B."/>
            <person name="Rehling P."/>
            <person name="Pfanner N."/>
            <person name="Meisinger C."/>
        </authorList>
    </citation>
    <scope>SUBCELLULAR LOCATION [LARGE SCALE ANALYSIS]</scope>
    <source>
        <strain>ATCC 76625 / YPH499</strain>
    </source>
</reference>
<reference key="17">
    <citation type="journal article" date="2007" name="J. Proteome Res.">
        <title>Large-scale phosphorylation analysis of alpha-factor-arrested Saccharomyces cerevisiae.</title>
        <authorList>
            <person name="Li X."/>
            <person name="Gerber S.A."/>
            <person name="Rudner A.D."/>
            <person name="Beausoleil S.A."/>
            <person name="Haas W."/>
            <person name="Villen J."/>
            <person name="Elias J.E."/>
            <person name="Gygi S.P."/>
        </authorList>
    </citation>
    <scope>PHOSPHORYLATION [LARGE SCALE ANALYSIS] AT SER-69 AND SER-72</scope>
    <scope>IDENTIFICATION BY MASS SPECTROMETRY [LARGE SCALE ANALYSIS]</scope>
    <source>
        <strain>ADR376</strain>
    </source>
</reference>
<reference key="18">
    <citation type="journal article" date="2008" name="Mol. Cell. Proteomics">
        <title>A multidimensional chromatography technology for in-depth phosphoproteome analysis.</title>
        <authorList>
            <person name="Albuquerque C.P."/>
            <person name="Smolka M.B."/>
            <person name="Payne S.H."/>
            <person name="Bafna V."/>
            <person name="Eng J."/>
            <person name="Zhou H."/>
        </authorList>
    </citation>
    <scope>PHOSPHORYLATION [LARGE SCALE ANALYSIS] AT SER-69 AND THR-74</scope>
    <scope>IDENTIFICATION BY MASS SPECTROMETRY [LARGE SCALE ANALYSIS]</scope>
</reference>
<reference key="19">
    <citation type="journal article" date="2009" name="Science">
        <title>Global analysis of Cdk1 substrate phosphorylation sites provides insights into evolution.</title>
        <authorList>
            <person name="Holt L.J."/>
            <person name="Tuch B.B."/>
            <person name="Villen J."/>
            <person name="Johnson A.D."/>
            <person name="Gygi S.P."/>
            <person name="Morgan D.O."/>
        </authorList>
    </citation>
    <scope>PHOSPHORYLATION [LARGE SCALE ANALYSIS] AT SER-69</scope>
    <scope>IDENTIFICATION BY MASS SPECTROMETRY [LARGE SCALE ANALYSIS]</scope>
</reference>
<gene>
    <name type="primary">VPS54</name>
    <name type="synonym">CGP1</name>
    <name type="synonym">LUV1</name>
    <name type="synonym">RKI1</name>
    <name type="synonym">TCS3</name>
    <name type="ordered locus">YDR027C</name>
    <name type="ORF">PZF889</name>
    <name type="ORF">YD9813.05C</name>
</gene>
<comment type="function">
    <text evidence="3 4 5 6 7 8 9 11">Involved in retrograde transport from early and late endosomes to late Golgi by linking the vesicle through the t-SNARE TGL1 to the Golgi, leading to the membrane fusion between late Golgi and endosomal vesicles. Also seems to be involved in protein transport from Golgi to the plasma membrane and is required for the integrity of the actin cytoskeleton.</text>
</comment>
<comment type="subunit">
    <text evidence="4 6 7 8 9 10 11 13">Component of the Golgi-associated retrograde protein (GARP) complex, also called VFT (VPS fifty-three) complex, composed of VPS51, VPS52, VPS53 and VPS54. Also interacts with YPT6, TLG1, RBL2, SEC10, SEC15, EXO84 and ARL1.</text>
</comment>
<comment type="interaction">
    <interactant intactId="EBI-36751">
        <id>Q12071</id>
    </interactant>
    <interactant intactId="EBI-2869">
        <id>P38116</id>
        <label>ARL1</label>
    </interactant>
    <organismsDiffer>false</organismsDiffer>
    <experiments>3</experiments>
</comment>
<comment type="interaction">
    <interactant intactId="EBI-36751">
        <id>Q12071</id>
    </interactant>
    <interactant intactId="EBI-26352">
        <id>P36116</id>
        <label>VPS51</label>
    </interactant>
    <organismsDiffer>false</organismsDiffer>
    <experiments>4</experiments>
</comment>
<comment type="interaction">
    <interactant intactId="EBI-36751">
        <id>Q12071</id>
    </interactant>
    <interactant intactId="EBI-16418">
        <id>P39904</id>
        <label>VPS52</label>
    </interactant>
    <organismsDiffer>false</organismsDiffer>
    <experiments>9</experiments>
</comment>
<comment type="interaction">
    <interactant intactId="EBI-36751">
        <id>Q12071</id>
    </interactant>
    <interactant intactId="EBI-25828">
        <id>P47061</id>
        <label>VPS53</label>
    </interactant>
    <organismsDiffer>false</organismsDiffer>
    <experiments>10</experiments>
</comment>
<comment type="subcellular location">
    <subcellularLocation>
        <location>Golgi apparatus</location>
        <location>trans-Golgi network membrane</location>
        <topology>Peripheral membrane protein</topology>
    </subcellularLocation>
    <subcellularLocation>
        <location>Endosome membrane</location>
        <topology>Peripheral membrane protein</topology>
    </subcellularLocation>
    <subcellularLocation>
        <location evidence="14">Mitochondrion membrane</location>
        <topology evidence="14">Peripheral membrane protein</topology>
    </subcellularLocation>
    <text>May also be mitochondrial.</text>
</comment>
<comment type="miscellaneous">
    <text evidence="12">Present with 2540 molecules/cell in log phase SD medium.</text>
</comment>
<comment type="similarity">
    <text evidence="14">Belongs to the VPS54 family.</text>
</comment>
<sequence length="889" mass="101520">MSISETPHNKSQGLQKAAGRPKIVVPEGSPSRNSDSGSFTIEGDTSLNDDLLSISGSVTPRARRSSRLSLDSITPRRSFDSRTLSVANSRSFGFENETHSGSMDFSPLGNNSIYEIVMNTRRKNWLNYPTVADIPQVSLSKNDLDDHWKTHVIEYVKNIKSDYQIFQSTNNIRNMNQMEQLKELREGENMHEESFEANLRQGDAELINSIPDFYFSDKFQLDNPRTFHKVLDAIDLFLTKLDMKRQAERDEAFSELRDRLNDFLDIVETLLVTEISKSSHKFFHALSEVDNIQKRALDTMSELKELAQNIKTIDAENIRKKISHLEMIFKRKNVEKLEQGLLQAKLVLNKTDECKSMYEENKLDNCLELIKSIDYLIKGDDSINEDVQSWTRCWPYKLSNLRTIPALSATREFLTNMKIEIGGKFSLQLSILLIDDLRSFCKSIKPKETLHRIQTGSNDKKQTIFTDNFSSKITELIVRLNRCEELTSAFDLYREKSITELKSIIKIYLPTENAHADNNHDEKHLNNGSTSGSKLSRLIKEQTPAEFQSMLVNIFTHALEALRRLYGHQKLLLDISLNELASVKSPNENQHNMITQLDIRTGINEIIRIIQLRTGKIIAVRRELNLSLRYDYFLKFYAICVIFIQECEVLSGEFLTKYLSNVLASQIKHYANAQSSKNYRNIKKKIDAEEWIPYIVDSSIQSDVNDIVSSIDIDPLSWTTILDMVGGSHDCENGRSEDKEKDEGNETYQGHRKSVVVGDKTFVASSSLLATIEVIKELMVLSINLPSIYLSNFEKLCYDALQYYNSSAMASVTQPGNSLLKTGRNLSIMGESLDCLAEFVIIVQRFYQRLSNSNRDFEPFDASHYTTLLGQFQASSNKIYMANAPPPPV</sequence>
<evidence type="ECO:0000255" key="1"/>
<evidence type="ECO:0000256" key="2">
    <source>
        <dbReference type="SAM" id="MobiDB-lite"/>
    </source>
</evidence>
<evidence type="ECO:0000269" key="3">
    <source>
    </source>
</evidence>
<evidence type="ECO:0000269" key="4">
    <source>
    </source>
</evidence>
<evidence type="ECO:0000269" key="5">
    <source>
    </source>
</evidence>
<evidence type="ECO:0000269" key="6">
    <source>
    </source>
</evidence>
<evidence type="ECO:0000269" key="7">
    <source>
    </source>
</evidence>
<evidence type="ECO:0000269" key="8">
    <source>
    </source>
</evidence>
<evidence type="ECO:0000269" key="9">
    <source>
    </source>
</evidence>
<evidence type="ECO:0000269" key="10">
    <source>
    </source>
</evidence>
<evidence type="ECO:0000269" key="11">
    <source>
    </source>
</evidence>
<evidence type="ECO:0000269" key="12">
    <source>
    </source>
</evidence>
<evidence type="ECO:0000269" key="13">
    <source>
    </source>
</evidence>
<evidence type="ECO:0000305" key="14"/>
<evidence type="ECO:0007744" key="15">
    <source>
    </source>
</evidence>
<evidence type="ECO:0007744" key="16">
    <source>
    </source>
</evidence>
<evidence type="ECO:0007744" key="17">
    <source>
    </source>
</evidence>
<accession>Q12071</accession>
<accession>D6VS12</accession>
<proteinExistence type="evidence at protein level"/>
<organism>
    <name type="scientific">Saccharomyces cerevisiae (strain ATCC 204508 / S288c)</name>
    <name type="common">Baker's yeast</name>
    <dbReference type="NCBI Taxonomy" id="559292"/>
    <lineage>
        <taxon>Eukaryota</taxon>
        <taxon>Fungi</taxon>
        <taxon>Dikarya</taxon>
        <taxon>Ascomycota</taxon>
        <taxon>Saccharomycotina</taxon>
        <taxon>Saccharomycetes</taxon>
        <taxon>Saccharomycetales</taxon>
        <taxon>Saccharomycetaceae</taxon>
        <taxon>Saccharomyces</taxon>
    </lineage>
</organism>
<keyword id="KW-0175">Coiled coil</keyword>
<keyword id="KW-0967">Endosome</keyword>
<keyword id="KW-0333">Golgi apparatus</keyword>
<keyword id="KW-0472">Membrane</keyword>
<keyword id="KW-0496">Mitochondrion</keyword>
<keyword id="KW-0597">Phosphoprotein</keyword>
<keyword id="KW-0653">Protein transport</keyword>
<keyword id="KW-1185">Reference proteome</keyword>
<keyword id="KW-0813">Transport</keyword>
<protein>
    <recommendedName>
        <fullName>Vacuolar protein sorting-associated protein 54</fullName>
    </recommendedName>
    <alternativeName>
        <fullName>CPF1 genetically-interacting protein 1</fullName>
    </alternativeName>
    <alternativeName>
        <fullName>Temperature-sensitive clathrin synthetic mutation protein 3</fullName>
    </alternativeName>
</protein>
<name>VPS54_YEAST</name>
<dbReference type="EMBL" id="X95966">
    <property type="protein sequence ID" value="CAA65220.1"/>
    <property type="molecule type" value="Genomic_DNA"/>
</dbReference>
<dbReference type="EMBL" id="Z47814">
    <property type="protein sequence ID" value="CAA87806.1"/>
    <property type="molecule type" value="Genomic_DNA"/>
</dbReference>
<dbReference type="EMBL" id="Z74323">
    <property type="protein sequence ID" value="CAA98849.1"/>
    <property type="molecule type" value="Genomic_DNA"/>
</dbReference>
<dbReference type="EMBL" id="BK006938">
    <property type="protein sequence ID" value="DAA11872.1"/>
    <property type="molecule type" value="Genomic_DNA"/>
</dbReference>
<dbReference type="PIR" id="S50934">
    <property type="entry name" value="S50934"/>
</dbReference>
<dbReference type="RefSeq" id="NP_010310.1">
    <property type="nucleotide sequence ID" value="NM_001180335.1"/>
</dbReference>
<dbReference type="SMR" id="Q12071"/>
<dbReference type="BioGRID" id="32077">
    <property type="interactions" value="240"/>
</dbReference>
<dbReference type="ComplexPortal" id="CPX-1718">
    <property type="entry name" value="GARP tethering complex"/>
</dbReference>
<dbReference type="DIP" id="DIP-5903N"/>
<dbReference type="FunCoup" id="Q12071">
    <property type="interactions" value="554"/>
</dbReference>
<dbReference type="IntAct" id="Q12071">
    <property type="interactions" value="18"/>
</dbReference>
<dbReference type="MINT" id="Q12071"/>
<dbReference type="STRING" id="4932.YDR027C"/>
<dbReference type="iPTMnet" id="Q12071"/>
<dbReference type="PaxDb" id="4932-YDR027C"/>
<dbReference type="PeptideAtlas" id="Q12071"/>
<dbReference type="EnsemblFungi" id="YDR027C_mRNA">
    <property type="protein sequence ID" value="YDR027C"/>
    <property type="gene ID" value="YDR027C"/>
</dbReference>
<dbReference type="GeneID" id="851591"/>
<dbReference type="KEGG" id="sce:YDR027C"/>
<dbReference type="AGR" id="SGD:S000002434"/>
<dbReference type="SGD" id="S000002434">
    <property type="gene designation" value="VPS54"/>
</dbReference>
<dbReference type="VEuPathDB" id="FungiDB:YDR027C"/>
<dbReference type="eggNOG" id="KOG2115">
    <property type="taxonomic scope" value="Eukaryota"/>
</dbReference>
<dbReference type="GeneTree" id="ENSGT00390000000583"/>
<dbReference type="HOGENOM" id="CLU_324701_0_0_1"/>
<dbReference type="InParanoid" id="Q12071"/>
<dbReference type="OMA" id="FSFVQSY"/>
<dbReference type="OrthoDB" id="10259024at2759"/>
<dbReference type="BioCyc" id="YEAST:G3O-29643-MONOMER"/>
<dbReference type="BioGRID-ORCS" id="851591">
    <property type="hits" value="4 hits in 10 CRISPR screens"/>
</dbReference>
<dbReference type="PRO" id="PR:Q12071"/>
<dbReference type="Proteomes" id="UP000002311">
    <property type="component" value="Chromosome IV"/>
</dbReference>
<dbReference type="RNAct" id="Q12071">
    <property type="molecule type" value="protein"/>
</dbReference>
<dbReference type="GO" id="GO:0005829">
    <property type="term" value="C:cytosol"/>
    <property type="evidence" value="ECO:0007669"/>
    <property type="project" value="GOC"/>
</dbReference>
<dbReference type="GO" id="GO:0010008">
    <property type="term" value="C:endosome membrane"/>
    <property type="evidence" value="ECO:0007669"/>
    <property type="project" value="UniProtKB-SubCell"/>
</dbReference>
<dbReference type="GO" id="GO:0000938">
    <property type="term" value="C:GARP complex"/>
    <property type="evidence" value="ECO:0000353"/>
    <property type="project" value="SGD"/>
</dbReference>
<dbReference type="GO" id="GO:0005794">
    <property type="term" value="C:Golgi apparatus"/>
    <property type="evidence" value="ECO:0000314"/>
    <property type="project" value="SGD"/>
</dbReference>
<dbReference type="GO" id="GO:0031966">
    <property type="term" value="C:mitochondrial membrane"/>
    <property type="evidence" value="ECO:0007669"/>
    <property type="project" value="UniProtKB-SubCell"/>
</dbReference>
<dbReference type="GO" id="GO:0005739">
    <property type="term" value="C:mitochondrion"/>
    <property type="evidence" value="ECO:0007005"/>
    <property type="project" value="SGD"/>
</dbReference>
<dbReference type="GO" id="GO:0019905">
    <property type="term" value="F:syntaxin binding"/>
    <property type="evidence" value="ECO:0000318"/>
    <property type="project" value="GO_Central"/>
</dbReference>
<dbReference type="GO" id="GO:0030476">
    <property type="term" value="P:ascospore wall assembly"/>
    <property type="evidence" value="ECO:0000315"/>
    <property type="project" value="SGD"/>
</dbReference>
<dbReference type="GO" id="GO:0006896">
    <property type="term" value="P:Golgi to vacuole transport"/>
    <property type="evidence" value="ECO:0000315"/>
    <property type="project" value="SGD"/>
</dbReference>
<dbReference type="GO" id="GO:0090156">
    <property type="term" value="P:intracellular sphingolipid homeostasis"/>
    <property type="evidence" value="ECO:0000315"/>
    <property type="project" value="SGD"/>
</dbReference>
<dbReference type="GO" id="GO:0006623">
    <property type="term" value="P:protein targeting to vacuole"/>
    <property type="evidence" value="ECO:0000314"/>
    <property type="project" value="ComplexPortal"/>
</dbReference>
<dbReference type="GO" id="GO:0042147">
    <property type="term" value="P:retrograde transport, endosome to Golgi"/>
    <property type="evidence" value="ECO:0000314"/>
    <property type="project" value="SGD"/>
</dbReference>
<dbReference type="InterPro" id="IPR039745">
    <property type="entry name" value="Vps54"/>
</dbReference>
<dbReference type="PANTHER" id="PTHR12965">
    <property type="entry name" value="VACUOLAR PROTEIN SORTING 54"/>
    <property type="match status" value="1"/>
</dbReference>
<dbReference type="PANTHER" id="PTHR12965:SF0">
    <property type="entry name" value="VACUOLAR PROTEIN SORTING-ASSOCIATED PROTEIN 54"/>
    <property type="match status" value="1"/>
</dbReference>